<feature type="chain" id="PRO_0000217868" description="Circadian clock oscillator protein KaiA">
    <location>
        <begin position="1"/>
        <end position="102"/>
    </location>
</feature>
<feature type="domain" description="KaiA C-terminal" evidence="3">
    <location>
        <begin position="1"/>
        <end position="102"/>
    </location>
</feature>
<feature type="mutagenesis site" description="Abolishes the interaction with KaiC." evidence="4">
    <original>R</original>
    <variation>A</variation>
    <location>
        <position position="69"/>
    </location>
</feature>
<feature type="helix" evidence="10">
    <location>
        <begin position="8"/>
        <end position="24"/>
    </location>
</feature>
<feature type="helix" evidence="10">
    <location>
        <begin position="33"/>
        <end position="45"/>
    </location>
</feature>
<feature type="helix" evidence="10">
    <location>
        <begin position="50"/>
        <end position="67"/>
    </location>
</feature>
<feature type="helix" evidence="10">
    <location>
        <begin position="79"/>
        <end position="81"/>
    </location>
</feature>
<feature type="helix" evidence="10">
    <location>
        <begin position="82"/>
        <end position="100"/>
    </location>
</feature>
<name>KAIA_NOSS1</name>
<proteinExistence type="evidence at protein level"/>
<dbReference type="EMBL" id="AB071284">
    <property type="protein sequence ID" value="BAB85867.1"/>
    <property type="molecule type" value="Genomic_DNA"/>
</dbReference>
<dbReference type="EMBL" id="BA000019">
    <property type="protein sequence ID" value="BAB74583.1"/>
    <property type="molecule type" value="Genomic_DNA"/>
</dbReference>
<dbReference type="PIR" id="AE2166">
    <property type="entry name" value="AE2166"/>
</dbReference>
<dbReference type="RefSeq" id="WP_010997035.1">
    <property type="nucleotide sequence ID" value="NZ_RSCN01000003.1"/>
</dbReference>
<dbReference type="PDB" id="1R5Q">
    <property type="method" value="X-ray"/>
    <property type="resolution" value="2.00 A"/>
    <property type="chains" value="A=1-102"/>
</dbReference>
<dbReference type="PDBsum" id="1R5Q"/>
<dbReference type="SMR" id="Q8YT42"/>
<dbReference type="STRING" id="103690.gene:10494918"/>
<dbReference type="KEGG" id="ana:alr2884"/>
<dbReference type="eggNOG" id="ENOG502Z8HQ">
    <property type="taxonomic scope" value="Bacteria"/>
</dbReference>
<dbReference type="OrthoDB" id="513549at2"/>
<dbReference type="EvolutionaryTrace" id="Q8YT42"/>
<dbReference type="Proteomes" id="UP000002483">
    <property type="component" value="Chromosome"/>
</dbReference>
<dbReference type="GO" id="GO:0007623">
    <property type="term" value="P:circadian rhythm"/>
    <property type="evidence" value="ECO:0007669"/>
    <property type="project" value="InterPro"/>
</dbReference>
<dbReference type="Gene3D" id="1.10.1240.30">
    <property type="entry name" value="KaiA/RbsU domain"/>
    <property type="match status" value="1"/>
</dbReference>
<dbReference type="InterPro" id="IPR011648">
    <property type="entry name" value="Circadian_clock_KaiA"/>
</dbReference>
<dbReference type="InterPro" id="IPR020856">
    <property type="entry name" value="Circadian_clock_protein_KaiA_C"/>
</dbReference>
<dbReference type="InterPro" id="IPR017944">
    <property type="entry name" value="KaiA/RbsU_helical_domain_sf"/>
</dbReference>
<dbReference type="Pfam" id="PF07688">
    <property type="entry name" value="KaiA"/>
    <property type="match status" value="1"/>
</dbReference>
<dbReference type="SMART" id="SM01247">
    <property type="entry name" value="KaiA"/>
    <property type="match status" value="1"/>
</dbReference>
<dbReference type="SUPFAM" id="SSF101215">
    <property type="entry name" value="KaiA/RbsU domain"/>
    <property type="match status" value="1"/>
</dbReference>
<dbReference type="PROSITE" id="PS51431">
    <property type="entry name" value="KAIA_C"/>
    <property type="match status" value="1"/>
</dbReference>
<evidence type="ECO:0000250" key="1">
    <source>
        <dbReference type="UniProtKB" id="Q79PF6"/>
    </source>
</evidence>
<evidence type="ECO:0000250" key="2">
    <source>
        <dbReference type="UniProtKB" id="Q79V62"/>
    </source>
</evidence>
<evidence type="ECO:0000255" key="3">
    <source>
        <dbReference type="PROSITE-ProRule" id="PRU00761"/>
    </source>
</evidence>
<evidence type="ECO:0000269" key="4">
    <source>
    </source>
</evidence>
<evidence type="ECO:0000303" key="5">
    <source ref="1"/>
</evidence>
<evidence type="ECO:0000305" key="6"/>
<evidence type="ECO:0000312" key="7">
    <source>
        <dbReference type="EMBL" id="BAB74583.1"/>
    </source>
</evidence>
<evidence type="ECO:0000312" key="8">
    <source>
        <dbReference type="EMBL" id="BAB85867.1"/>
    </source>
</evidence>
<evidence type="ECO:0007744" key="9">
    <source>
        <dbReference type="PDB" id="1R5Q"/>
    </source>
</evidence>
<evidence type="ECO:0007829" key="10">
    <source>
        <dbReference type="PDB" id="1R5Q"/>
    </source>
</evidence>
<sequence>MTQEVDQQILLQQLKSDYRQILLSYFTTDKALKEKIDKFINAVFCANIPVPEIIEIHMELIDEFSKQLRLEGRGDETLMDYRLTLIDILAHLCEAYRGAIFK</sequence>
<organism>
    <name type="scientific">Nostoc sp. (strain PCC 7120 / SAG 25.82 / UTEX 2576)</name>
    <dbReference type="NCBI Taxonomy" id="103690"/>
    <lineage>
        <taxon>Bacteria</taxon>
        <taxon>Bacillati</taxon>
        <taxon>Cyanobacteriota</taxon>
        <taxon>Cyanophyceae</taxon>
        <taxon>Nostocales</taxon>
        <taxon>Nostocaceae</taxon>
        <taxon>Nostoc</taxon>
    </lineage>
</organism>
<comment type="function">
    <text evidence="1">Key component of the KaiABC oscillator complex, which constitutes the main circadian regulator in cyanobacteria. Complex composition changes during the circadian cycle to control KaiC phosphorylation. KaiA stimulates KaiC autophosphorylation, while KaiB sequesters KaiA, leading to KaiC autodephosphorylation. KaiA binding to the KaiC CII domain during the subjective day yields KaiA(2-4):KaiC(6) complexes which stimulate KaiC autophosphorylation. Phospho-Ser-431 KaiC accumulation triggers binding of KaiB during the subjective night to form the KaiB(6):KaiC(6) complex, leading to changes in the output regulators CikA and SasA. KaiB(6):KaiC(6) formation exposes a site for KaiA binding on KaiB that sequesters KaiA from KaiC's CII domain, making the KaiC(6):KaiB(6):KaiA(12) complex resulting in KaiC autodephosphorylation. Complete dephosphorylation of KaiC leads to dissociation of KaiA(2):KaiB(1), completing 1 cycle of the Kai oscillator.</text>
</comment>
<comment type="subunit">
    <text evidence="1 4">Homodimer (PubMed:15071498). The KaiABC complex composition changes during the circadian cycle to control KaiC phosphorylation. Complexes KaiC(6), KaiA(2-4):KaiC(6), KaiB(6):KaiC(6) and KaiC(6):KaiB(6):KaiA(12) are among the most important forms, many form cooperatively. KaiA and CikA bind to the same region of the KaiB(fs) form and therefore compete (By similarity).</text>
</comment>
<comment type="domain">
    <text evidence="2">The KaiA C-terminal domain mediates interaction with KaiC, homodimerization, and is responsible for the clock oscillation function.</text>
</comment>
<comment type="miscellaneous">
    <text>Lacks the N-terminal pseudoreceiver domain (PsR) domain found in some cyanobacteria (also called KaiA N-terminal domain).</text>
</comment>
<comment type="similarity">
    <text evidence="6">Belongs to the KaiA family.</text>
</comment>
<reference evidence="8" key="1">
    <citation type="submission" date="2001-09" db="EMBL/GenBank/DDBJ databases">
        <title>Circadian clock gene in Anabaena sp. strain PCC 7120.</title>
        <authorList>
            <person name="Uzumaki T."/>
            <person name="Nakahira Y."/>
            <person name="Hayashi F."/>
            <person name="Fujita M."/>
            <person name="Wolk C.P."/>
            <person name="Kondo T."/>
            <person name="Ishiura M."/>
        </authorList>
    </citation>
    <scope>NUCLEOTIDE SEQUENCE [GENOMIC DNA]</scope>
    <source>
        <strain>PCC 7120 / SAG 25.82 / UTEX 2576</strain>
    </source>
</reference>
<reference evidence="7" key="2">
    <citation type="journal article" date="2001" name="DNA Res.">
        <title>Complete genomic sequence of the filamentous nitrogen-fixing cyanobacterium Anabaena sp. strain PCC 7120.</title>
        <authorList>
            <person name="Kaneko T."/>
            <person name="Nakamura Y."/>
            <person name="Wolk C.P."/>
            <person name="Kuritz T."/>
            <person name="Sasamoto S."/>
            <person name="Watanabe A."/>
            <person name="Iriguchi M."/>
            <person name="Ishikawa A."/>
            <person name="Kawashima K."/>
            <person name="Kimura T."/>
            <person name="Kishida Y."/>
            <person name="Kohara M."/>
            <person name="Matsumoto M."/>
            <person name="Matsuno A."/>
            <person name="Muraki A."/>
            <person name="Nakazaki N."/>
            <person name="Shimpo S."/>
            <person name="Sugimoto M."/>
            <person name="Takazawa M."/>
            <person name="Yamada M."/>
            <person name="Yasuda M."/>
            <person name="Tabata S."/>
        </authorList>
    </citation>
    <scope>NUCLEOTIDE SEQUENCE [LARGE SCALE GENOMIC DNA]</scope>
    <source>
        <strain>PCC 7120 / SAG 25.82 / UTEX 2576</strain>
    </source>
</reference>
<reference evidence="9" key="3">
    <citation type="journal article" date="2004" name="EMBO J.">
        <title>Anabaena circadian clock proteins KaiA and KaiB reveal a potential common binding site to their partner KaiC.</title>
        <authorList>
            <person name="Garces R.G."/>
            <person name="Wu N."/>
            <person name="Gillon W."/>
            <person name="Pai E.F."/>
        </authorList>
    </citation>
    <scope>X-RAY CRYSTALLOGRAPHY (2.0 ANGSTROMS)</scope>
    <scope>HOMODIMERIZATION</scope>
    <scope>MUTAGENESIS OF ARG-69</scope>
    <source>
        <strain>PCC 7120 / SAG 25.82 / UTEX 2576</strain>
    </source>
</reference>
<gene>
    <name evidence="5" type="primary">kaiA</name>
    <name type="ordered locus">alr2884</name>
</gene>
<keyword id="KW-0002">3D-structure</keyword>
<keyword id="KW-0090">Biological rhythms</keyword>
<keyword id="KW-1185">Reference proteome</keyword>
<accession>Q8YT42</accession>
<protein>
    <recommendedName>
        <fullName evidence="5">Circadian clock oscillator protein KaiA</fullName>
    </recommendedName>
</protein>